<keyword id="KW-0479">Metal-binding</keyword>
<keyword id="KW-1185">Reference proteome</keyword>
<keyword id="KW-0687">Ribonucleoprotein</keyword>
<keyword id="KW-0689">Ribosomal protein</keyword>
<keyword id="KW-0694">RNA-binding</keyword>
<keyword id="KW-0699">rRNA-binding</keyword>
<keyword id="KW-0862">Zinc</keyword>
<name>RL31_CAMLR</name>
<evidence type="ECO:0000255" key="1">
    <source>
        <dbReference type="HAMAP-Rule" id="MF_00501"/>
    </source>
</evidence>
<evidence type="ECO:0000305" key="2"/>
<sequence>MKKEIHPEYVECKVSCACGNSFTTKSNKPEIKVDICSSCHPFFTGSEKIVDAAGRVEKFKKKYAMQ</sequence>
<accession>B9KDU7</accession>
<proteinExistence type="inferred from homology"/>
<gene>
    <name evidence="1" type="primary">rpmE</name>
    <name type="ordered locus">Cla_1420</name>
</gene>
<comment type="function">
    <text evidence="1">Binds the 23S rRNA.</text>
</comment>
<comment type="cofactor">
    <cofactor evidence="1">
        <name>Zn(2+)</name>
        <dbReference type="ChEBI" id="CHEBI:29105"/>
    </cofactor>
    <text evidence="1">Binds 1 zinc ion per subunit.</text>
</comment>
<comment type="subunit">
    <text evidence="1">Part of the 50S ribosomal subunit.</text>
</comment>
<comment type="similarity">
    <text evidence="1">Belongs to the bacterial ribosomal protein bL31 family. Type A subfamily.</text>
</comment>
<reference key="1">
    <citation type="journal article" date="2008" name="Foodborne Pathog. Dis.">
        <title>The complete genome sequence and analysis of the human pathogen Campylobacter lari.</title>
        <authorList>
            <person name="Miller W.G."/>
            <person name="Wang G."/>
            <person name="Binnewies T.T."/>
            <person name="Parker C.T."/>
        </authorList>
    </citation>
    <scope>NUCLEOTIDE SEQUENCE [LARGE SCALE GENOMIC DNA]</scope>
    <source>
        <strain>RM2100 / D67 / ATCC BAA-1060</strain>
    </source>
</reference>
<protein>
    <recommendedName>
        <fullName evidence="1">Large ribosomal subunit protein bL31</fullName>
    </recommendedName>
    <alternativeName>
        <fullName evidence="2">50S ribosomal protein L31</fullName>
    </alternativeName>
</protein>
<feature type="chain" id="PRO_1000176953" description="Large ribosomal subunit protein bL31">
    <location>
        <begin position="1"/>
        <end position="66"/>
    </location>
</feature>
<feature type="binding site" evidence="1">
    <location>
        <position position="16"/>
    </location>
    <ligand>
        <name>Zn(2+)</name>
        <dbReference type="ChEBI" id="CHEBI:29105"/>
    </ligand>
</feature>
<feature type="binding site" evidence="1">
    <location>
        <position position="18"/>
    </location>
    <ligand>
        <name>Zn(2+)</name>
        <dbReference type="ChEBI" id="CHEBI:29105"/>
    </ligand>
</feature>
<feature type="binding site" evidence="1">
    <location>
        <position position="36"/>
    </location>
    <ligand>
        <name>Zn(2+)</name>
        <dbReference type="ChEBI" id="CHEBI:29105"/>
    </ligand>
</feature>
<feature type="binding site" evidence="1">
    <location>
        <position position="39"/>
    </location>
    <ligand>
        <name>Zn(2+)</name>
        <dbReference type="ChEBI" id="CHEBI:29105"/>
    </ligand>
</feature>
<dbReference type="EMBL" id="CP000932">
    <property type="protein sequence ID" value="ACM64735.1"/>
    <property type="molecule type" value="Genomic_DNA"/>
</dbReference>
<dbReference type="RefSeq" id="WP_012662118.1">
    <property type="nucleotide sequence ID" value="NC_012039.1"/>
</dbReference>
<dbReference type="RefSeq" id="WP_012662119.1">
    <property type="nucleotide sequence ID" value="NC_012039.1"/>
</dbReference>
<dbReference type="SMR" id="B9KDU7"/>
<dbReference type="STRING" id="306263.Cla_1420"/>
<dbReference type="KEGG" id="cla:CLA_1420"/>
<dbReference type="eggNOG" id="COG0254">
    <property type="taxonomic scope" value="Bacteria"/>
</dbReference>
<dbReference type="HOGENOM" id="CLU_114306_4_3_7"/>
<dbReference type="Proteomes" id="UP000007727">
    <property type="component" value="Chromosome"/>
</dbReference>
<dbReference type="GO" id="GO:1990904">
    <property type="term" value="C:ribonucleoprotein complex"/>
    <property type="evidence" value="ECO:0007669"/>
    <property type="project" value="UniProtKB-KW"/>
</dbReference>
<dbReference type="GO" id="GO:0005840">
    <property type="term" value="C:ribosome"/>
    <property type="evidence" value="ECO:0007669"/>
    <property type="project" value="UniProtKB-KW"/>
</dbReference>
<dbReference type="GO" id="GO:0046872">
    <property type="term" value="F:metal ion binding"/>
    <property type="evidence" value="ECO:0007669"/>
    <property type="project" value="UniProtKB-KW"/>
</dbReference>
<dbReference type="GO" id="GO:0019843">
    <property type="term" value="F:rRNA binding"/>
    <property type="evidence" value="ECO:0007669"/>
    <property type="project" value="UniProtKB-KW"/>
</dbReference>
<dbReference type="GO" id="GO:0003735">
    <property type="term" value="F:structural constituent of ribosome"/>
    <property type="evidence" value="ECO:0007669"/>
    <property type="project" value="InterPro"/>
</dbReference>
<dbReference type="GO" id="GO:0006412">
    <property type="term" value="P:translation"/>
    <property type="evidence" value="ECO:0007669"/>
    <property type="project" value="UniProtKB-UniRule"/>
</dbReference>
<dbReference type="Gene3D" id="4.10.830.30">
    <property type="entry name" value="Ribosomal protein L31"/>
    <property type="match status" value="1"/>
</dbReference>
<dbReference type="HAMAP" id="MF_00501">
    <property type="entry name" value="Ribosomal_bL31_1"/>
    <property type="match status" value="1"/>
</dbReference>
<dbReference type="InterPro" id="IPR034704">
    <property type="entry name" value="Ribosomal_bL28/bL31-like_sf"/>
</dbReference>
<dbReference type="InterPro" id="IPR002150">
    <property type="entry name" value="Ribosomal_bL31"/>
</dbReference>
<dbReference type="InterPro" id="IPR027491">
    <property type="entry name" value="Ribosomal_bL31_A"/>
</dbReference>
<dbReference type="InterPro" id="IPR042105">
    <property type="entry name" value="Ribosomal_bL31_sf"/>
</dbReference>
<dbReference type="NCBIfam" id="TIGR00105">
    <property type="entry name" value="L31"/>
    <property type="match status" value="1"/>
</dbReference>
<dbReference type="NCBIfam" id="NF000612">
    <property type="entry name" value="PRK00019.1"/>
    <property type="match status" value="1"/>
</dbReference>
<dbReference type="NCBIfam" id="NF001809">
    <property type="entry name" value="PRK00528.1"/>
    <property type="match status" value="1"/>
</dbReference>
<dbReference type="PANTHER" id="PTHR33280">
    <property type="entry name" value="50S RIBOSOMAL PROTEIN L31, CHLOROPLASTIC"/>
    <property type="match status" value="1"/>
</dbReference>
<dbReference type="PANTHER" id="PTHR33280:SF1">
    <property type="entry name" value="LARGE RIBOSOMAL SUBUNIT PROTEIN BL31C"/>
    <property type="match status" value="1"/>
</dbReference>
<dbReference type="Pfam" id="PF01197">
    <property type="entry name" value="Ribosomal_L31"/>
    <property type="match status" value="1"/>
</dbReference>
<dbReference type="PRINTS" id="PR01249">
    <property type="entry name" value="RIBOSOMALL31"/>
</dbReference>
<dbReference type="SUPFAM" id="SSF143800">
    <property type="entry name" value="L28p-like"/>
    <property type="match status" value="1"/>
</dbReference>
<dbReference type="PROSITE" id="PS01143">
    <property type="entry name" value="RIBOSOMAL_L31"/>
    <property type="match status" value="1"/>
</dbReference>
<organism>
    <name type="scientific">Campylobacter lari (strain RM2100 / D67 / ATCC BAA-1060)</name>
    <dbReference type="NCBI Taxonomy" id="306263"/>
    <lineage>
        <taxon>Bacteria</taxon>
        <taxon>Pseudomonadati</taxon>
        <taxon>Campylobacterota</taxon>
        <taxon>Epsilonproteobacteria</taxon>
        <taxon>Campylobacterales</taxon>
        <taxon>Campylobacteraceae</taxon>
        <taxon>Campylobacter</taxon>
    </lineage>
</organism>